<proteinExistence type="predicted"/>
<accession>P09698</accession>
<reference key="1">
    <citation type="journal article" date="1986" name="J. Mol. Biol.">
        <title>Sequence of the short unique region, short repeats, and part of the long repeats of human cytomegalovirus.</title>
        <authorList>
            <person name="Weston K.M."/>
            <person name="Barrell B.G."/>
        </authorList>
    </citation>
    <scope>NUCLEOTIDE SEQUENCE [GENOMIC DNA]</scope>
</reference>
<name>YHL4_HCMVA</name>
<organism>
    <name type="scientific">Human cytomegalovirus (strain AD169)</name>
    <name type="common">HHV-5</name>
    <name type="synonym">Human herpesvirus 5</name>
    <dbReference type="NCBI Taxonomy" id="10360"/>
    <lineage>
        <taxon>Viruses</taxon>
        <taxon>Duplodnaviria</taxon>
        <taxon>Heunggongvirae</taxon>
        <taxon>Peploviricota</taxon>
        <taxon>Herviviricetes</taxon>
        <taxon>Herpesvirales</taxon>
        <taxon>Orthoherpesviridae</taxon>
        <taxon>Betaherpesvirinae</taxon>
        <taxon>Cytomegalovirus</taxon>
        <taxon>Cytomegalovirus humanbeta5</taxon>
        <taxon>Human cytomegalovirus</taxon>
    </lineage>
</organism>
<organismHost>
    <name type="scientific">Homo sapiens</name>
    <name type="common">Human</name>
    <dbReference type="NCBI Taxonomy" id="9606"/>
</organismHost>
<evidence type="ECO:0000256" key="1">
    <source>
        <dbReference type="SAM" id="MobiDB-lite"/>
    </source>
</evidence>
<feature type="chain" id="PRO_0000115248" description="Uncharacterized protein HHLF4">
    <location>
        <begin position="1"/>
        <end position="172"/>
    </location>
</feature>
<feature type="region of interest" description="Disordered" evidence="1">
    <location>
        <begin position="22"/>
        <end position="64"/>
    </location>
</feature>
<protein>
    <recommendedName>
        <fullName>Uncharacterized protein HHLF4</fullName>
    </recommendedName>
</protein>
<sequence length="172" mass="18223">TAVTLVTATLAAASATFPTVRRSVSSSPAAKQPAPGTVAQSFPPGELALRDETGGRGRGTRGIRRTPTAAQGVITPGVAETPAIVRIANPGLPLDRHVFQPVCGLRLLAVWLLVLNLNVALPVTARTPQVVRVVDYATPTLFALQERHEIELVGRRPRLTDETPTALESKDK</sequence>
<dbReference type="EMBL" id="X04650">
    <property type="protein sequence ID" value="CAB37118.1"/>
    <property type="molecule type" value="Genomic_DNA"/>
</dbReference>
<dbReference type="PIR" id="G27216">
    <property type="entry name" value="QQBED7"/>
</dbReference>